<dbReference type="EMBL" id="CR925677">
    <property type="protein sequence ID" value="CAI27608.1"/>
    <property type="molecule type" value="Genomic_DNA"/>
</dbReference>
<dbReference type="RefSeq" id="WP_011255339.1">
    <property type="nucleotide sequence ID" value="NC_006831.1"/>
</dbReference>
<dbReference type="SMR" id="Q5FFE8"/>
<dbReference type="KEGG" id="erg:ERGA_CDS_01560"/>
<dbReference type="HOGENOM" id="CLU_072226_1_1_5"/>
<dbReference type="OrthoDB" id="9807653at2"/>
<dbReference type="Proteomes" id="UP000000533">
    <property type="component" value="Chromosome"/>
</dbReference>
<dbReference type="GO" id="GO:0015935">
    <property type="term" value="C:small ribosomal subunit"/>
    <property type="evidence" value="ECO:0007669"/>
    <property type="project" value="InterPro"/>
</dbReference>
<dbReference type="GO" id="GO:0019843">
    <property type="term" value="F:rRNA binding"/>
    <property type="evidence" value="ECO:0007669"/>
    <property type="project" value="UniProtKB-UniRule"/>
</dbReference>
<dbReference type="GO" id="GO:0003735">
    <property type="term" value="F:structural constituent of ribosome"/>
    <property type="evidence" value="ECO:0007669"/>
    <property type="project" value="InterPro"/>
</dbReference>
<dbReference type="GO" id="GO:0000049">
    <property type="term" value="F:tRNA binding"/>
    <property type="evidence" value="ECO:0007669"/>
    <property type="project" value="UniProtKB-UniRule"/>
</dbReference>
<dbReference type="GO" id="GO:0006412">
    <property type="term" value="P:translation"/>
    <property type="evidence" value="ECO:0007669"/>
    <property type="project" value="UniProtKB-UniRule"/>
</dbReference>
<dbReference type="CDD" id="cd14869">
    <property type="entry name" value="uS7_Bacteria"/>
    <property type="match status" value="1"/>
</dbReference>
<dbReference type="FunFam" id="1.10.455.10:FF:000001">
    <property type="entry name" value="30S ribosomal protein S7"/>
    <property type="match status" value="1"/>
</dbReference>
<dbReference type="Gene3D" id="1.10.455.10">
    <property type="entry name" value="Ribosomal protein S7 domain"/>
    <property type="match status" value="1"/>
</dbReference>
<dbReference type="HAMAP" id="MF_00480_B">
    <property type="entry name" value="Ribosomal_uS7_B"/>
    <property type="match status" value="1"/>
</dbReference>
<dbReference type="InterPro" id="IPR000235">
    <property type="entry name" value="Ribosomal_uS7"/>
</dbReference>
<dbReference type="InterPro" id="IPR005717">
    <property type="entry name" value="Ribosomal_uS7_bac/org-type"/>
</dbReference>
<dbReference type="InterPro" id="IPR023798">
    <property type="entry name" value="Ribosomal_uS7_dom"/>
</dbReference>
<dbReference type="InterPro" id="IPR036823">
    <property type="entry name" value="Ribosomal_uS7_dom_sf"/>
</dbReference>
<dbReference type="NCBIfam" id="TIGR01029">
    <property type="entry name" value="rpsG_bact"/>
    <property type="match status" value="1"/>
</dbReference>
<dbReference type="PANTHER" id="PTHR11205">
    <property type="entry name" value="RIBOSOMAL PROTEIN S7"/>
    <property type="match status" value="1"/>
</dbReference>
<dbReference type="Pfam" id="PF00177">
    <property type="entry name" value="Ribosomal_S7"/>
    <property type="match status" value="1"/>
</dbReference>
<dbReference type="PIRSF" id="PIRSF002122">
    <property type="entry name" value="RPS7p_RPS7a_RPS5e_RPS7o"/>
    <property type="match status" value="1"/>
</dbReference>
<dbReference type="SUPFAM" id="SSF47973">
    <property type="entry name" value="Ribosomal protein S7"/>
    <property type="match status" value="1"/>
</dbReference>
<organism>
    <name type="scientific">Ehrlichia ruminantium (strain Gardel)</name>
    <dbReference type="NCBI Taxonomy" id="302409"/>
    <lineage>
        <taxon>Bacteria</taxon>
        <taxon>Pseudomonadati</taxon>
        <taxon>Pseudomonadota</taxon>
        <taxon>Alphaproteobacteria</taxon>
        <taxon>Rickettsiales</taxon>
        <taxon>Anaplasmataceae</taxon>
        <taxon>Ehrlichia</taxon>
    </lineage>
</organism>
<protein>
    <recommendedName>
        <fullName evidence="1">Small ribosomal subunit protein uS7</fullName>
    </recommendedName>
    <alternativeName>
        <fullName evidence="2">30S ribosomal protein S7</fullName>
    </alternativeName>
</protein>
<proteinExistence type="inferred from homology"/>
<name>RS7_EHRRG</name>
<evidence type="ECO:0000255" key="1">
    <source>
        <dbReference type="HAMAP-Rule" id="MF_00480"/>
    </source>
</evidence>
<evidence type="ECO:0000305" key="2"/>
<sequence length="160" mass="18365">MSRRRRANKRVITPDSKYNSVLLARFINVIMRSGERSIAEKIVYGALSKAENRIGESAMSVFSSALNNVMPQMEVRSRRIGGVTYQVPVEVKEDRSVSLALRWISRAAATARKRSNKMYMDCLCNELLEAYNKRGGAYKIREEKYKMAEANKAFSHFRFN</sequence>
<gene>
    <name evidence="1" type="primary">rpsG</name>
    <name type="ordered locus">ERGA_CDS_01560</name>
</gene>
<feature type="chain" id="PRO_0000226500" description="Small ribosomal subunit protein uS7">
    <location>
        <begin position="1"/>
        <end position="160"/>
    </location>
</feature>
<keyword id="KW-0687">Ribonucleoprotein</keyword>
<keyword id="KW-0689">Ribosomal protein</keyword>
<keyword id="KW-0694">RNA-binding</keyword>
<keyword id="KW-0699">rRNA-binding</keyword>
<keyword id="KW-0820">tRNA-binding</keyword>
<comment type="function">
    <text evidence="1">One of the primary rRNA binding proteins, it binds directly to 16S rRNA where it nucleates assembly of the head domain of the 30S subunit. Is located at the subunit interface close to the decoding center, probably blocks exit of the E-site tRNA.</text>
</comment>
<comment type="subunit">
    <text evidence="1">Part of the 30S ribosomal subunit. Contacts proteins S9 and S11.</text>
</comment>
<comment type="similarity">
    <text evidence="1">Belongs to the universal ribosomal protein uS7 family.</text>
</comment>
<accession>Q5FFE8</accession>
<reference key="1">
    <citation type="journal article" date="2006" name="J. Bacteriol.">
        <title>Comparative genomic analysis of three strains of Ehrlichia ruminantium reveals an active process of genome size plasticity.</title>
        <authorList>
            <person name="Frutos R."/>
            <person name="Viari A."/>
            <person name="Ferraz C."/>
            <person name="Morgat A."/>
            <person name="Eychenie S."/>
            <person name="Kandassamy Y."/>
            <person name="Chantal I."/>
            <person name="Bensaid A."/>
            <person name="Coissac E."/>
            <person name="Vachiery N."/>
            <person name="Demaille J."/>
            <person name="Martinez D."/>
        </authorList>
    </citation>
    <scope>NUCLEOTIDE SEQUENCE [LARGE SCALE GENOMIC DNA]</scope>
    <source>
        <strain>Gardel</strain>
    </source>
</reference>